<feature type="chain" id="PRO_0000147942" description="Phosphoglucosamine mutase">
    <location>
        <begin position="1"/>
        <end position="447"/>
    </location>
</feature>
<feature type="active site" description="Phosphoserine intermediate" evidence="1">
    <location>
        <position position="102"/>
    </location>
</feature>
<feature type="binding site" description="via phosphate group" evidence="1">
    <location>
        <position position="102"/>
    </location>
    <ligand>
        <name>Mg(2+)</name>
        <dbReference type="ChEBI" id="CHEBI:18420"/>
    </ligand>
</feature>
<feature type="binding site" evidence="1">
    <location>
        <position position="241"/>
    </location>
    <ligand>
        <name>Mg(2+)</name>
        <dbReference type="ChEBI" id="CHEBI:18420"/>
    </ligand>
</feature>
<feature type="binding site" evidence="1">
    <location>
        <position position="243"/>
    </location>
    <ligand>
        <name>Mg(2+)</name>
        <dbReference type="ChEBI" id="CHEBI:18420"/>
    </ligand>
</feature>
<feature type="binding site" evidence="1">
    <location>
        <position position="245"/>
    </location>
    <ligand>
        <name>Mg(2+)</name>
        <dbReference type="ChEBI" id="CHEBI:18420"/>
    </ligand>
</feature>
<feature type="modified residue" description="Phosphoserine" evidence="1">
    <location>
        <position position="102"/>
    </location>
</feature>
<organism>
    <name type="scientific">Pseudomonas syringae pv. syringae (strain B728a)</name>
    <dbReference type="NCBI Taxonomy" id="205918"/>
    <lineage>
        <taxon>Bacteria</taxon>
        <taxon>Pseudomonadati</taxon>
        <taxon>Pseudomonadota</taxon>
        <taxon>Gammaproteobacteria</taxon>
        <taxon>Pseudomonadales</taxon>
        <taxon>Pseudomonadaceae</taxon>
        <taxon>Pseudomonas</taxon>
        <taxon>Pseudomonas syringae</taxon>
    </lineage>
</organism>
<reference key="1">
    <citation type="journal article" date="1997" name="J. Bacteriol.">
        <title>Multiple loci of Pseudomonas syringae pv. syringae are involved in pathogenicity on bean: restoration of one lesion-deficient mutant requires two tRNA genes.</title>
        <authorList>
            <person name="Rich J.J."/>
            <person name="Willis D.K."/>
        </authorList>
    </citation>
    <scope>NUCLEOTIDE SEQUENCE [GENOMIC DNA]</scope>
</reference>
<reference key="2">
    <citation type="journal article" date="2005" name="Proc. Natl. Acad. Sci. U.S.A.">
        <title>Comparison of the complete genome sequences of Pseudomonas syringae pv. syringae B728a and pv. tomato DC3000.</title>
        <authorList>
            <person name="Feil H."/>
            <person name="Feil W.S."/>
            <person name="Chain P."/>
            <person name="Larimer F."/>
            <person name="Dibartolo G."/>
            <person name="Copeland A."/>
            <person name="Lykidis A."/>
            <person name="Trong S."/>
            <person name="Nolan M."/>
            <person name="Goltsman E."/>
            <person name="Thiel J."/>
            <person name="Malfatti S."/>
            <person name="Loper J.E."/>
            <person name="Lapidus A."/>
            <person name="Detter J.C."/>
            <person name="Land M."/>
            <person name="Richardson P.M."/>
            <person name="Kyrpides N.C."/>
            <person name="Ivanova N."/>
            <person name="Lindow S.E."/>
        </authorList>
    </citation>
    <scope>NUCLEOTIDE SEQUENCE [LARGE SCALE GENOMIC DNA]</scope>
    <source>
        <strain>B728a</strain>
    </source>
</reference>
<proteinExistence type="inferred from homology"/>
<dbReference type="EC" id="5.4.2.10" evidence="1"/>
<dbReference type="EMBL" id="U85643">
    <property type="protein sequence ID" value="AAC45130.1"/>
    <property type="molecule type" value="Genomic_DNA"/>
</dbReference>
<dbReference type="EMBL" id="CP000075">
    <property type="protein sequence ID" value="AAY39215.1"/>
    <property type="molecule type" value="Genomic_DNA"/>
</dbReference>
<dbReference type="RefSeq" id="WP_011268883.1">
    <property type="nucleotide sequence ID" value="NC_007005.1"/>
</dbReference>
<dbReference type="RefSeq" id="YP_237253.1">
    <property type="nucleotide sequence ID" value="NC_007005.1"/>
</dbReference>
<dbReference type="SMR" id="P95575"/>
<dbReference type="STRING" id="205918.Psyr_4185"/>
<dbReference type="KEGG" id="psb:Psyr_4185"/>
<dbReference type="PATRIC" id="fig|205918.7.peg.4312"/>
<dbReference type="eggNOG" id="COG1109">
    <property type="taxonomic scope" value="Bacteria"/>
</dbReference>
<dbReference type="HOGENOM" id="CLU_016950_7_0_6"/>
<dbReference type="OrthoDB" id="9803322at2"/>
<dbReference type="Proteomes" id="UP000000426">
    <property type="component" value="Chromosome"/>
</dbReference>
<dbReference type="GO" id="GO:0005829">
    <property type="term" value="C:cytosol"/>
    <property type="evidence" value="ECO:0007669"/>
    <property type="project" value="TreeGrafter"/>
</dbReference>
<dbReference type="GO" id="GO:0000287">
    <property type="term" value="F:magnesium ion binding"/>
    <property type="evidence" value="ECO:0007669"/>
    <property type="project" value="UniProtKB-UniRule"/>
</dbReference>
<dbReference type="GO" id="GO:0008966">
    <property type="term" value="F:phosphoglucosamine mutase activity"/>
    <property type="evidence" value="ECO:0007669"/>
    <property type="project" value="UniProtKB-UniRule"/>
</dbReference>
<dbReference type="GO" id="GO:0004615">
    <property type="term" value="F:phosphomannomutase activity"/>
    <property type="evidence" value="ECO:0007669"/>
    <property type="project" value="TreeGrafter"/>
</dbReference>
<dbReference type="GO" id="GO:0005975">
    <property type="term" value="P:carbohydrate metabolic process"/>
    <property type="evidence" value="ECO:0007669"/>
    <property type="project" value="InterPro"/>
</dbReference>
<dbReference type="GO" id="GO:0009252">
    <property type="term" value="P:peptidoglycan biosynthetic process"/>
    <property type="evidence" value="ECO:0007669"/>
    <property type="project" value="TreeGrafter"/>
</dbReference>
<dbReference type="GO" id="GO:0006048">
    <property type="term" value="P:UDP-N-acetylglucosamine biosynthetic process"/>
    <property type="evidence" value="ECO:0007669"/>
    <property type="project" value="TreeGrafter"/>
</dbReference>
<dbReference type="CDD" id="cd05802">
    <property type="entry name" value="GlmM"/>
    <property type="match status" value="1"/>
</dbReference>
<dbReference type="FunFam" id="3.30.310.50:FF:000001">
    <property type="entry name" value="Phosphoglucosamine mutase"/>
    <property type="match status" value="1"/>
</dbReference>
<dbReference type="FunFam" id="3.40.120.10:FF:000001">
    <property type="entry name" value="Phosphoglucosamine mutase"/>
    <property type="match status" value="1"/>
</dbReference>
<dbReference type="FunFam" id="3.40.120.10:FF:000003">
    <property type="entry name" value="Phosphoglucosamine mutase"/>
    <property type="match status" value="1"/>
</dbReference>
<dbReference type="Gene3D" id="3.40.120.10">
    <property type="entry name" value="Alpha-D-Glucose-1,6-Bisphosphate, subunit A, domain 3"/>
    <property type="match status" value="3"/>
</dbReference>
<dbReference type="Gene3D" id="3.30.310.50">
    <property type="entry name" value="Alpha-D-phosphohexomutase, C-terminal domain"/>
    <property type="match status" value="1"/>
</dbReference>
<dbReference type="HAMAP" id="MF_01554_B">
    <property type="entry name" value="GlmM_B"/>
    <property type="match status" value="1"/>
</dbReference>
<dbReference type="InterPro" id="IPR005844">
    <property type="entry name" value="A-D-PHexomutase_a/b/a-I"/>
</dbReference>
<dbReference type="InterPro" id="IPR016055">
    <property type="entry name" value="A-D-PHexomutase_a/b/a-I/II/III"/>
</dbReference>
<dbReference type="InterPro" id="IPR005845">
    <property type="entry name" value="A-D-PHexomutase_a/b/a-II"/>
</dbReference>
<dbReference type="InterPro" id="IPR005846">
    <property type="entry name" value="A-D-PHexomutase_a/b/a-III"/>
</dbReference>
<dbReference type="InterPro" id="IPR005843">
    <property type="entry name" value="A-D-PHexomutase_C"/>
</dbReference>
<dbReference type="InterPro" id="IPR036900">
    <property type="entry name" value="A-D-PHexomutase_C_sf"/>
</dbReference>
<dbReference type="InterPro" id="IPR016066">
    <property type="entry name" value="A-D-PHexomutase_CS"/>
</dbReference>
<dbReference type="InterPro" id="IPR005841">
    <property type="entry name" value="Alpha-D-phosphohexomutase_SF"/>
</dbReference>
<dbReference type="InterPro" id="IPR006352">
    <property type="entry name" value="GlmM_bact"/>
</dbReference>
<dbReference type="InterPro" id="IPR050060">
    <property type="entry name" value="Phosphoglucosamine_mutase"/>
</dbReference>
<dbReference type="NCBIfam" id="TIGR01455">
    <property type="entry name" value="glmM"/>
    <property type="match status" value="1"/>
</dbReference>
<dbReference type="NCBIfam" id="NF008139">
    <property type="entry name" value="PRK10887.1"/>
    <property type="match status" value="1"/>
</dbReference>
<dbReference type="PANTHER" id="PTHR42946:SF1">
    <property type="entry name" value="PHOSPHOGLUCOMUTASE (ALPHA-D-GLUCOSE-1,6-BISPHOSPHATE-DEPENDENT)"/>
    <property type="match status" value="1"/>
</dbReference>
<dbReference type="PANTHER" id="PTHR42946">
    <property type="entry name" value="PHOSPHOHEXOSE MUTASE"/>
    <property type="match status" value="1"/>
</dbReference>
<dbReference type="Pfam" id="PF02878">
    <property type="entry name" value="PGM_PMM_I"/>
    <property type="match status" value="1"/>
</dbReference>
<dbReference type="Pfam" id="PF02879">
    <property type="entry name" value="PGM_PMM_II"/>
    <property type="match status" value="1"/>
</dbReference>
<dbReference type="Pfam" id="PF02880">
    <property type="entry name" value="PGM_PMM_III"/>
    <property type="match status" value="1"/>
</dbReference>
<dbReference type="Pfam" id="PF00408">
    <property type="entry name" value="PGM_PMM_IV"/>
    <property type="match status" value="1"/>
</dbReference>
<dbReference type="PRINTS" id="PR00509">
    <property type="entry name" value="PGMPMM"/>
</dbReference>
<dbReference type="SUPFAM" id="SSF55957">
    <property type="entry name" value="Phosphoglucomutase, C-terminal domain"/>
    <property type="match status" value="1"/>
</dbReference>
<dbReference type="SUPFAM" id="SSF53738">
    <property type="entry name" value="Phosphoglucomutase, first 3 domains"/>
    <property type="match status" value="3"/>
</dbReference>
<dbReference type="PROSITE" id="PS00710">
    <property type="entry name" value="PGM_PMM"/>
    <property type="match status" value="1"/>
</dbReference>
<comment type="function">
    <text evidence="1">Catalyzes the conversion of glucosamine-6-phosphate to glucosamine-1-phosphate.</text>
</comment>
<comment type="catalytic activity">
    <reaction evidence="1">
        <text>alpha-D-glucosamine 1-phosphate = D-glucosamine 6-phosphate</text>
        <dbReference type="Rhea" id="RHEA:23424"/>
        <dbReference type="ChEBI" id="CHEBI:58516"/>
        <dbReference type="ChEBI" id="CHEBI:58725"/>
        <dbReference type="EC" id="5.4.2.10"/>
    </reaction>
</comment>
<comment type="cofactor">
    <cofactor evidence="1">
        <name>Mg(2+)</name>
        <dbReference type="ChEBI" id="CHEBI:18420"/>
    </cofactor>
    <text evidence="1">Binds 1 Mg(2+) ion per subunit.</text>
</comment>
<comment type="PTM">
    <text evidence="1">Activated by phosphorylation.</text>
</comment>
<comment type="similarity">
    <text evidence="1">Belongs to the phosphohexose mutase family.</text>
</comment>
<keyword id="KW-0413">Isomerase</keyword>
<keyword id="KW-0460">Magnesium</keyword>
<keyword id="KW-0479">Metal-binding</keyword>
<keyword id="KW-0597">Phosphoprotein</keyword>
<sequence>MTSRKYFGTDGIRGRVGQFPITPEFMLKLGWAAGMAFRKMGACRILVGKDTRISGYMFESALEAGLSAAGADVLLLGPMPTPAIAYLTRTFHAEAGIVISASHNPHYDNGIKFFSGQGTKLPDEIEMMIEELLDAPMTVAESENLGKVSRINDAAGRYIEFCKSSVPTSTDFAGLKVVIDCAHGATYKVAPNVFRELGAQVVVLSAQPDGLNINKDCGSTHMEALQAAVLAEHADMGIGFDGDGDRVLMVDHTGTIVDGDELLYIIARDLHERGRLQGGVVGTLMSNLGLELALAEQGIPFVRANVGDRYVIAELLERNWQIGGENSGHIVCFQHATTGDAIIASLQVILALRRSGVSLAEARLKLRKCPQILINVRFAGSGVDPVSHPSVKEACARVTEQMAGRGRVLLRKSGTEPLVRVMVEGEDETQVRAYAEELAKLVTEVCA</sequence>
<accession>P95575</accession>
<accession>Q4ZNQ7</accession>
<protein>
    <recommendedName>
        <fullName evidence="1">Phosphoglucosamine mutase</fullName>
        <ecNumber evidence="1">5.4.2.10</ecNumber>
    </recommendedName>
</protein>
<name>GLMM_PSEU2</name>
<evidence type="ECO:0000255" key="1">
    <source>
        <dbReference type="HAMAP-Rule" id="MF_01554"/>
    </source>
</evidence>
<gene>
    <name evidence="1" type="primary">glmM</name>
    <name type="synonym">mrsA</name>
    <name type="ordered locus">Psyr_4185</name>
</gene>